<organism>
    <name type="scientific">Rickettsia felis (strain ATCC VR-1525 / URRWXCal2)</name>
    <name type="common">Rickettsia azadi</name>
    <dbReference type="NCBI Taxonomy" id="315456"/>
    <lineage>
        <taxon>Bacteria</taxon>
        <taxon>Pseudomonadati</taxon>
        <taxon>Pseudomonadota</taxon>
        <taxon>Alphaproteobacteria</taxon>
        <taxon>Rickettsiales</taxon>
        <taxon>Rickettsiaceae</taxon>
        <taxon>Rickettsieae</taxon>
        <taxon>Rickettsia</taxon>
        <taxon>spotted fever group</taxon>
    </lineage>
</organism>
<comment type="function">
    <text evidence="1">Responsible for synthesis of pseudouridine from uracil-55 in the psi GC loop of transfer RNAs.</text>
</comment>
<comment type="catalytic activity">
    <reaction evidence="1">
        <text>uridine(55) in tRNA = pseudouridine(55) in tRNA</text>
        <dbReference type="Rhea" id="RHEA:42532"/>
        <dbReference type="Rhea" id="RHEA-COMP:10101"/>
        <dbReference type="Rhea" id="RHEA-COMP:10102"/>
        <dbReference type="ChEBI" id="CHEBI:65314"/>
        <dbReference type="ChEBI" id="CHEBI:65315"/>
        <dbReference type="EC" id="5.4.99.25"/>
    </reaction>
</comment>
<comment type="similarity">
    <text evidence="1">Belongs to the pseudouridine synthase TruB family. Type 1 subfamily.</text>
</comment>
<comment type="sequence caution" evidence="2">
    <conflict type="erroneous initiation">
        <sequence resource="EMBL-CDS" id="AAY61574"/>
    </conflict>
</comment>
<sequence length="339" mass="38192">MNSYWLNIYKPRGISSAKLVSMVKKILGKEVKVGHAGTLDVEAEGILPLAVGEATKLIQLLIDAKKTYIFTVKFGTKTDSGDYAGTVIATKDYIPSQEEAYNVCSKFIGNVTQIPPAFSALKVNGVRAYKLAREGKEVELKPRNITIYNLKCLNFDEKNATASYYTECSKGTYIRTLAEDLALSLQSLGFVIELRRTQVGIFKEENAIRIKSPDEITKNFLEEKSIKIEAILDDILVLDATDSQAQQIKYGQKCLFNYEEDFRRLSKFAYREEFEENTERSTAAYTLVREDANTGLTYKLPLEVELSVSLLWVRYKGNLLAIGSLNKSCFNSLRVFNLL</sequence>
<feature type="chain" id="PRO_0000229379" description="tRNA pseudouridine synthase B">
    <location>
        <begin position="1"/>
        <end position="339"/>
    </location>
</feature>
<feature type="domain" description="RPE1 insert">
    <location>
        <begin position="262"/>
        <end position="307"/>
    </location>
</feature>
<feature type="active site" description="Nucleophile" evidence="1">
    <location>
        <position position="40"/>
    </location>
</feature>
<accession>Q4ULJ9</accession>
<keyword id="KW-0413">Isomerase</keyword>
<keyword id="KW-0819">tRNA processing</keyword>
<evidence type="ECO:0000255" key="1">
    <source>
        <dbReference type="HAMAP-Rule" id="MF_01080"/>
    </source>
</evidence>
<evidence type="ECO:0000305" key="2"/>
<name>TRUB_RICFE</name>
<dbReference type="EC" id="5.4.99.25" evidence="1"/>
<dbReference type="EMBL" id="CP000053">
    <property type="protein sequence ID" value="AAY61574.1"/>
    <property type="status" value="ALT_INIT"/>
    <property type="molecule type" value="Genomic_DNA"/>
</dbReference>
<dbReference type="SMR" id="Q4ULJ9"/>
<dbReference type="STRING" id="315456.RF_0723"/>
<dbReference type="KEGG" id="rfe:RF_0723"/>
<dbReference type="eggNOG" id="COG0130">
    <property type="taxonomic scope" value="Bacteria"/>
</dbReference>
<dbReference type="eggNOG" id="COG1565">
    <property type="taxonomic scope" value="Bacteria"/>
</dbReference>
<dbReference type="HOGENOM" id="CLU_032087_0_3_5"/>
<dbReference type="OrthoDB" id="9802309at2"/>
<dbReference type="Proteomes" id="UP000008548">
    <property type="component" value="Chromosome"/>
</dbReference>
<dbReference type="GO" id="GO:0003723">
    <property type="term" value="F:RNA binding"/>
    <property type="evidence" value="ECO:0007669"/>
    <property type="project" value="InterPro"/>
</dbReference>
<dbReference type="GO" id="GO:0160148">
    <property type="term" value="F:tRNA pseudouridine(55) synthase activity"/>
    <property type="evidence" value="ECO:0007669"/>
    <property type="project" value="UniProtKB-EC"/>
</dbReference>
<dbReference type="GO" id="GO:1990481">
    <property type="term" value="P:mRNA pseudouridine synthesis"/>
    <property type="evidence" value="ECO:0007669"/>
    <property type="project" value="TreeGrafter"/>
</dbReference>
<dbReference type="GO" id="GO:0031119">
    <property type="term" value="P:tRNA pseudouridine synthesis"/>
    <property type="evidence" value="ECO:0007669"/>
    <property type="project" value="UniProtKB-UniRule"/>
</dbReference>
<dbReference type="CDD" id="cd02573">
    <property type="entry name" value="PseudoU_synth_EcTruB"/>
    <property type="match status" value="1"/>
</dbReference>
<dbReference type="Gene3D" id="3.30.2350.10">
    <property type="entry name" value="Pseudouridine synthase"/>
    <property type="match status" value="1"/>
</dbReference>
<dbReference type="HAMAP" id="MF_01080">
    <property type="entry name" value="TruB_bact"/>
    <property type="match status" value="1"/>
</dbReference>
<dbReference type="InterPro" id="IPR020103">
    <property type="entry name" value="PsdUridine_synth_cat_dom_sf"/>
</dbReference>
<dbReference type="InterPro" id="IPR002501">
    <property type="entry name" value="PsdUridine_synth_N"/>
</dbReference>
<dbReference type="InterPro" id="IPR005728">
    <property type="entry name" value="RPE1"/>
</dbReference>
<dbReference type="InterPro" id="IPR014780">
    <property type="entry name" value="tRNA_psdUridine_synth_TruB"/>
</dbReference>
<dbReference type="InterPro" id="IPR032819">
    <property type="entry name" value="TruB_C"/>
</dbReference>
<dbReference type="NCBIfam" id="TIGR01045">
    <property type="entry name" value="RPE1"/>
    <property type="match status" value="1"/>
</dbReference>
<dbReference type="NCBIfam" id="TIGR00431">
    <property type="entry name" value="TruB"/>
    <property type="match status" value="1"/>
</dbReference>
<dbReference type="PANTHER" id="PTHR13767:SF2">
    <property type="entry name" value="PSEUDOURIDYLATE SYNTHASE TRUB1"/>
    <property type="match status" value="1"/>
</dbReference>
<dbReference type="PANTHER" id="PTHR13767">
    <property type="entry name" value="TRNA-PSEUDOURIDINE SYNTHASE"/>
    <property type="match status" value="1"/>
</dbReference>
<dbReference type="Pfam" id="PF16198">
    <property type="entry name" value="TruB_C_2"/>
    <property type="match status" value="1"/>
</dbReference>
<dbReference type="Pfam" id="PF01509">
    <property type="entry name" value="TruB_N"/>
    <property type="match status" value="1"/>
</dbReference>
<dbReference type="SUPFAM" id="SSF55120">
    <property type="entry name" value="Pseudouridine synthase"/>
    <property type="match status" value="1"/>
</dbReference>
<reference key="1">
    <citation type="journal article" date="2005" name="PLoS Biol.">
        <title>The genome sequence of Rickettsia felis identifies the first putative conjugative plasmid in an obligate intracellular parasite.</title>
        <authorList>
            <person name="Ogata H."/>
            <person name="Renesto P."/>
            <person name="Audic S."/>
            <person name="Robert C."/>
            <person name="Blanc G."/>
            <person name="Fournier P.-E."/>
            <person name="Parinello H."/>
            <person name="Claverie J.-M."/>
            <person name="Raoult D."/>
        </authorList>
    </citation>
    <scope>NUCLEOTIDE SEQUENCE [LARGE SCALE GENOMIC DNA]</scope>
    <source>
        <strain>ATCC VR-1525 / URRWXCal2</strain>
    </source>
</reference>
<proteinExistence type="inferred from homology"/>
<gene>
    <name evidence="1" type="primary">truB</name>
    <name type="ordered locus">RF_0723</name>
</gene>
<protein>
    <recommendedName>
        <fullName evidence="1">tRNA pseudouridine synthase B</fullName>
        <ecNumber evidence="1">5.4.99.25</ecNumber>
    </recommendedName>
    <alternativeName>
        <fullName evidence="1">tRNA pseudouridine(55) synthase</fullName>
        <shortName evidence="1">Psi55 synthase</shortName>
    </alternativeName>
    <alternativeName>
        <fullName evidence="1">tRNA pseudouridylate synthase</fullName>
    </alternativeName>
    <alternativeName>
        <fullName evidence="1">tRNA-uridine isomerase</fullName>
    </alternativeName>
</protein>